<organism>
    <name type="scientific">Rhododendron ferrugineum</name>
    <name type="common">Alpenrose</name>
    <dbReference type="NCBI Taxonomy" id="49622"/>
    <lineage>
        <taxon>Eukaryota</taxon>
        <taxon>Viridiplantae</taxon>
        <taxon>Streptophyta</taxon>
        <taxon>Embryophyta</taxon>
        <taxon>Tracheophyta</taxon>
        <taxon>Spermatophyta</taxon>
        <taxon>Magnoliopsida</taxon>
        <taxon>eudicotyledons</taxon>
        <taxon>Gunneridae</taxon>
        <taxon>Pentapetalae</taxon>
        <taxon>asterids</taxon>
        <taxon>Ericales</taxon>
        <taxon>Ericaceae</taxon>
        <taxon>Ericoideae</taxon>
        <taxon>Rhodoreae</taxon>
        <taxon>Rhododendron</taxon>
    </lineage>
</organism>
<name>MATK_RHOFR</name>
<dbReference type="EMBL" id="AB012741">
    <property type="protein sequence ID" value="BAA25862.1"/>
    <property type="molecule type" value="Genomic_DNA"/>
</dbReference>
<dbReference type="GO" id="GO:0009507">
    <property type="term" value="C:chloroplast"/>
    <property type="evidence" value="ECO:0007669"/>
    <property type="project" value="UniProtKB-SubCell"/>
</dbReference>
<dbReference type="GO" id="GO:0003723">
    <property type="term" value="F:RNA binding"/>
    <property type="evidence" value="ECO:0007669"/>
    <property type="project" value="UniProtKB-KW"/>
</dbReference>
<dbReference type="GO" id="GO:0006397">
    <property type="term" value="P:mRNA processing"/>
    <property type="evidence" value="ECO:0007669"/>
    <property type="project" value="UniProtKB-KW"/>
</dbReference>
<dbReference type="GO" id="GO:0008380">
    <property type="term" value="P:RNA splicing"/>
    <property type="evidence" value="ECO:0007669"/>
    <property type="project" value="UniProtKB-UniRule"/>
</dbReference>
<dbReference type="GO" id="GO:0008033">
    <property type="term" value="P:tRNA processing"/>
    <property type="evidence" value="ECO:0007669"/>
    <property type="project" value="UniProtKB-KW"/>
</dbReference>
<dbReference type="HAMAP" id="MF_01390">
    <property type="entry name" value="MatK"/>
    <property type="match status" value="1"/>
</dbReference>
<dbReference type="InterPro" id="IPR024937">
    <property type="entry name" value="Domain_X"/>
</dbReference>
<dbReference type="InterPro" id="IPR002866">
    <property type="entry name" value="Maturase_MatK"/>
</dbReference>
<dbReference type="InterPro" id="IPR024942">
    <property type="entry name" value="Maturase_MatK_N"/>
</dbReference>
<dbReference type="PANTHER" id="PTHR34811">
    <property type="entry name" value="MATURASE K"/>
    <property type="match status" value="1"/>
</dbReference>
<dbReference type="PANTHER" id="PTHR34811:SF1">
    <property type="entry name" value="MATURASE K"/>
    <property type="match status" value="1"/>
</dbReference>
<dbReference type="Pfam" id="PF01348">
    <property type="entry name" value="Intron_maturas2"/>
    <property type="match status" value="1"/>
</dbReference>
<dbReference type="Pfam" id="PF01824">
    <property type="entry name" value="MatK_N"/>
    <property type="match status" value="1"/>
</dbReference>
<feature type="chain" id="PRO_0000143676" description="Maturase K">
    <location>
        <begin position="1"/>
        <end position="506"/>
    </location>
</feature>
<protein>
    <recommendedName>
        <fullName evidence="1">Maturase K</fullName>
    </recommendedName>
    <alternativeName>
        <fullName evidence="1">Intron maturase</fullName>
    </alternativeName>
</protein>
<keyword id="KW-0150">Chloroplast</keyword>
<keyword id="KW-0507">mRNA processing</keyword>
<keyword id="KW-0934">Plastid</keyword>
<keyword id="KW-0694">RNA-binding</keyword>
<keyword id="KW-0819">tRNA processing</keyword>
<proteinExistence type="inferred from homology"/>
<geneLocation type="chloroplast"/>
<reference key="1">
    <citation type="journal article" date="1998" name="Shokubutsu Kenkyu Zasshi">
        <title>Investigation of sectional relationships in the genus Rhododendron (Ericaceae) based on matK sequences.</title>
        <authorList>
            <person name="Kurashige Y."/>
            <person name="Mine M."/>
            <person name="Kobayashi N."/>
            <person name="Handa T."/>
            <person name="Takayanagi K."/>
            <person name="Yukawa T."/>
        </authorList>
    </citation>
    <scope>NUCLEOTIDE SEQUENCE [GENOMIC DNA]</scope>
</reference>
<accession>O62984</accession>
<gene>
    <name evidence="1" type="primary">matK</name>
</gene>
<sequence>MEEFKRNLELDRSQQHDFIYPLIFQEYIYALAHDRGLNRSIFLENTGYENKSSLLIVKRLIIHLITQMYQQNHFLFSGNDSNQNKFLGYNTNLYSQMIFEGFAVVVEIPFYLRLLSFLEGKERVKSHNLRSIHSIFPFLEDKFSHLVYVLDILISHPIHLEIVIQTLRYWVKDASSLHLLRFFLHEYPIWNSLITPKKSSFSFSIRNQRFFLFLYNFHVCEYESIFVFLRNQSSHLRSISSETFLERISFYRKIELEVFTKDFKAIIWVFKEPFLHYVRYRGKAILASKGTSLLMNKWKYYLVNFWQCYFYMWSQPRRIHINQLSNHSLDFLGYLSTVRLKPLMVRSQMIENSFIIENASKKFDTLMPITPMIRSLSKAKFCNVLGHPMSKPVWAALSDSDIIERFGRIYRNLSHYYSGSLKKMSLYRIKYILRLSCARTLARKHKSTVRAFLKRLGVGLLEEFFTEEEQVFYLTFAKASSNSGELYQRRVWYLDIICINDLANYE</sequence>
<comment type="function">
    <text evidence="1">Usually encoded in the trnK tRNA gene intron. Probably assists in splicing its own and other chloroplast group II introns.</text>
</comment>
<comment type="subcellular location">
    <subcellularLocation>
        <location>Plastid</location>
        <location>Chloroplast</location>
    </subcellularLocation>
</comment>
<comment type="similarity">
    <text evidence="1">Belongs to the intron maturase 2 family. MatK subfamily.</text>
</comment>
<evidence type="ECO:0000255" key="1">
    <source>
        <dbReference type="HAMAP-Rule" id="MF_01390"/>
    </source>
</evidence>